<dbReference type="EMBL" id="U14003">
    <property type="protein sequence ID" value="AAA97026.1"/>
    <property type="molecule type" value="Genomic_DNA"/>
</dbReference>
<dbReference type="EMBL" id="U00096">
    <property type="protein sequence ID" value="AAC77087.1"/>
    <property type="molecule type" value="Genomic_DNA"/>
</dbReference>
<dbReference type="EMBL" id="AP009048">
    <property type="protein sequence ID" value="BAE78128.1"/>
    <property type="molecule type" value="Genomic_DNA"/>
</dbReference>
<dbReference type="PIR" id="S56355">
    <property type="entry name" value="S56355"/>
</dbReference>
<dbReference type="RefSeq" id="NP_418550.1">
    <property type="nucleotide sequence ID" value="NC_000913.3"/>
</dbReference>
<dbReference type="RefSeq" id="WP_000371704.1">
    <property type="nucleotide sequence ID" value="NZ_SSZK01000018.1"/>
</dbReference>
<dbReference type="SMR" id="P0AF59"/>
<dbReference type="BioGRID" id="4261979">
    <property type="interactions" value="12"/>
</dbReference>
<dbReference type="BioGRID" id="852940">
    <property type="interactions" value="2"/>
</dbReference>
<dbReference type="DIP" id="DIP-48210N"/>
<dbReference type="FunCoup" id="P0AF59">
    <property type="interactions" value="31"/>
</dbReference>
<dbReference type="IntAct" id="P0AF59">
    <property type="interactions" value="6"/>
</dbReference>
<dbReference type="STRING" id="511145.b4126"/>
<dbReference type="jPOST" id="P0AF59"/>
<dbReference type="PaxDb" id="511145-b4126"/>
<dbReference type="EnsemblBacteria" id="AAC77087">
    <property type="protein sequence ID" value="AAC77087"/>
    <property type="gene ID" value="b4126"/>
</dbReference>
<dbReference type="GeneID" id="75169644"/>
<dbReference type="GeneID" id="948648"/>
<dbReference type="KEGG" id="ecj:JW4087"/>
<dbReference type="KEGG" id="eco:b4126"/>
<dbReference type="KEGG" id="ecoc:C3026_22300"/>
<dbReference type="PATRIC" id="fig|511145.12.peg.4257"/>
<dbReference type="EchoBASE" id="EB2359"/>
<dbReference type="eggNOG" id="COG3592">
    <property type="taxonomic scope" value="Bacteria"/>
</dbReference>
<dbReference type="HOGENOM" id="CLU_139698_2_0_6"/>
<dbReference type="InParanoid" id="P0AF59"/>
<dbReference type="OMA" id="YFNTNVC"/>
<dbReference type="OrthoDB" id="9798157at2"/>
<dbReference type="BioCyc" id="EcoCyc:G7828-MONOMER"/>
<dbReference type="PRO" id="PR:P0AF59"/>
<dbReference type="Proteomes" id="UP000000625">
    <property type="component" value="Chromosome"/>
</dbReference>
<dbReference type="InterPro" id="IPR010693">
    <property type="entry name" value="Divergent_4Fe-4S_mono-cluster"/>
</dbReference>
<dbReference type="Pfam" id="PF06902">
    <property type="entry name" value="Fer4_19"/>
    <property type="match status" value="1"/>
</dbReference>
<accession>P0AF59</accession>
<accession>P39273</accession>
<accession>Q2M6H8</accession>
<gene>
    <name type="primary">yjdI</name>
    <name type="ordered locus">b4126</name>
    <name type="ordered locus">JW4087</name>
</gene>
<name>YJDI_ECOLI</name>
<organism>
    <name type="scientific">Escherichia coli (strain K12)</name>
    <dbReference type="NCBI Taxonomy" id="83333"/>
    <lineage>
        <taxon>Bacteria</taxon>
        <taxon>Pseudomonadati</taxon>
        <taxon>Pseudomonadota</taxon>
        <taxon>Gammaproteobacteria</taxon>
        <taxon>Enterobacterales</taxon>
        <taxon>Enterobacteriaceae</taxon>
        <taxon>Escherichia</taxon>
    </lineage>
</organism>
<protein>
    <recommendedName>
        <fullName>Uncharacterized protein YjdI</fullName>
    </recommendedName>
</protein>
<keyword id="KW-1185">Reference proteome</keyword>
<reference key="1">
    <citation type="journal article" date="1995" name="Nucleic Acids Res.">
        <title>Analysis of the Escherichia coli genome VI: DNA sequence of the region from 92.8 through 100 minutes.</title>
        <authorList>
            <person name="Burland V.D."/>
            <person name="Plunkett G. III"/>
            <person name="Sofia H.J."/>
            <person name="Daniels D.L."/>
            <person name="Blattner F.R."/>
        </authorList>
    </citation>
    <scope>NUCLEOTIDE SEQUENCE [LARGE SCALE GENOMIC DNA]</scope>
    <source>
        <strain>K12 / MG1655 / ATCC 47076</strain>
    </source>
</reference>
<reference key="2">
    <citation type="journal article" date="1997" name="Science">
        <title>The complete genome sequence of Escherichia coli K-12.</title>
        <authorList>
            <person name="Blattner F.R."/>
            <person name="Plunkett G. III"/>
            <person name="Bloch C.A."/>
            <person name="Perna N.T."/>
            <person name="Burland V."/>
            <person name="Riley M."/>
            <person name="Collado-Vides J."/>
            <person name="Glasner J.D."/>
            <person name="Rode C.K."/>
            <person name="Mayhew G.F."/>
            <person name="Gregor J."/>
            <person name="Davis N.W."/>
            <person name="Kirkpatrick H.A."/>
            <person name="Goeden M.A."/>
            <person name="Rose D.J."/>
            <person name="Mau B."/>
            <person name="Shao Y."/>
        </authorList>
    </citation>
    <scope>NUCLEOTIDE SEQUENCE [LARGE SCALE GENOMIC DNA]</scope>
    <source>
        <strain>K12 / MG1655 / ATCC 47076</strain>
    </source>
</reference>
<reference key="3">
    <citation type="journal article" date="2006" name="Mol. Syst. Biol.">
        <title>Highly accurate genome sequences of Escherichia coli K-12 strains MG1655 and W3110.</title>
        <authorList>
            <person name="Hayashi K."/>
            <person name="Morooka N."/>
            <person name="Yamamoto Y."/>
            <person name="Fujita K."/>
            <person name="Isono K."/>
            <person name="Choi S."/>
            <person name="Ohtsubo E."/>
            <person name="Baba T."/>
            <person name="Wanner B.L."/>
            <person name="Mori H."/>
            <person name="Horiuchi T."/>
        </authorList>
    </citation>
    <scope>NUCLEOTIDE SEQUENCE [LARGE SCALE GENOMIC DNA]</scope>
    <source>
        <strain>K12 / W3110 / ATCC 27325 / DSM 5911</strain>
    </source>
</reference>
<proteinExistence type="predicted"/>
<feature type="chain" id="PRO_0000169730" description="Uncharacterized protein YjdI">
    <location>
        <begin position="1"/>
        <end position="76"/>
    </location>
</feature>
<sequence length="76" mass="8550">MDQALLDGGYRCYTGEKIDVYFNTAICQHSGNCVRGNGKLFNLKRKPWIMPDEVDVATVVKVIDTCPSGALKYRHK</sequence>